<comment type="function">
    <text evidence="1">Catalyzes the 1,3-allylic rearrangement of the homoallylic substrate isopentenyl (IPP) to its highly electrophilic allylic isomer, dimethylallyl diphosphate (DMAPP).</text>
</comment>
<comment type="catalytic activity">
    <reaction evidence="1">
        <text>isopentenyl diphosphate = dimethylallyl diphosphate</text>
        <dbReference type="Rhea" id="RHEA:23284"/>
        <dbReference type="ChEBI" id="CHEBI:57623"/>
        <dbReference type="ChEBI" id="CHEBI:128769"/>
        <dbReference type="EC" id="5.3.3.2"/>
    </reaction>
</comment>
<comment type="cofactor">
    <cofactor evidence="1">
        <name>Mg(2+)</name>
        <dbReference type="ChEBI" id="CHEBI:18420"/>
    </cofactor>
    <text evidence="1">Binds 1 Mg(2+) ion per subunit. The magnesium ion binds only when substrate is bound.</text>
</comment>
<comment type="cofactor">
    <cofactor evidence="1">
        <name>Mn(2+)</name>
        <dbReference type="ChEBI" id="CHEBI:29035"/>
    </cofactor>
    <text evidence="1">Binds 1 Mn(2+) ion per subunit.</text>
</comment>
<comment type="pathway">
    <text evidence="1">Isoprenoid biosynthesis; dimethylallyl diphosphate biosynthesis; dimethylallyl diphosphate from isopentenyl diphosphate: step 1/1.</text>
</comment>
<comment type="subcellular location">
    <subcellularLocation>
        <location evidence="1">Cytoplasm</location>
    </subcellularLocation>
</comment>
<comment type="similarity">
    <text evidence="1">Belongs to the IPP isomerase type 1 family.</text>
</comment>
<organism>
    <name type="scientific">Streptomyces coelicolor (strain ATCC BAA-471 / A3(2) / M145)</name>
    <dbReference type="NCBI Taxonomy" id="100226"/>
    <lineage>
        <taxon>Bacteria</taxon>
        <taxon>Bacillati</taxon>
        <taxon>Actinomycetota</taxon>
        <taxon>Actinomycetes</taxon>
        <taxon>Kitasatosporales</taxon>
        <taxon>Streptomycetaceae</taxon>
        <taxon>Streptomyces</taxon>
        <taxon>Streptomyces albidoflavus group</taxon>
    </lineage>
</organism>
<protein>
    <recommendedName>
        <fullName evidence="1">Isopentenyl-diphosphate Delta-isomerase</fullName>
        <shortName evidence="1">IPP isomerase</shortName>
        <ecNumber evidence="1">5.3.3.2</ecNumber>
    </recommendedName>
    <alternativeName>
        <fullName evidence="1">IPP:DMAPP isomerase</fullName>
    </alternativeName>
    <alternativeName>
        <fullName evidence="1">Isopentenyl pyrophosphate isomerase</fullName>
    </alternativeName>
</protein>
<accession>Q9X7Q6</accession>
<dbReference type="EC" id="5.3.3.2" evidence="1"/>
<dbReference type="EMBL" id="AL939129">
    <property type="protein sequence ID" value="CAB40700.1"/>
    <property type="molecule type" value="Genomic_DNA"/>
</dbReference>
<dbReference type="PIR" id="T35275">
    <property type="entry name" value="T35275"/>
</dbReference>
<dbReference type="RefSeq" id="NP_630823.1">
    <property type="nucleotide sequence ID" value="NC_003888.3"/>
</dbReference>
<dbReference type="RefSeq" id="WP_003972247.1">
    <property type="nucleotide sequence ID" value="NZ_VNID01000002.1"/>
</dbReference>
<dbReference type="SMR" id="Q9X7Q6"/>
<dbReference type="FunCoup" id="Q9X7Q6">
    <property type="interactions" value="338"/>
</dbReference>
<dbReference type="STRING" id="100226.gene:17764408"/>
<dbReference type="PaxDb" id="100226-SCO6750"/>
<dbReference type="GeneID" id="91382366"/>
<dbReference type="KEGG" id="sco:SCO6750"/>
<dbReference type="PATRIC" id="fig|100226.15.peg.6857"/>
<dbReference type="eggNOG" id="COG1443">
    <property type="taxonomic scope" value="Bacteria"/>
</dbReference>
<dbReference type="HOGENOM" id="CLU_060552_2_1_11"/>
<dbReference type="InParanoid" id="Q9X7Q6"/>
<dbReference type="OrthoDB" id="9809458at2"/>
<dbReference type="PhylomeDB" id="Q9X7Q6"/>
<dbReference type="UniPathway" id="UPA00059">
    <property type="reaction ID" value="UER00104"/>
</dbReference>
<dbReference type="Proteomes" id="UP000001973">
    <property type="component" value="Chromosome"/>
</dbReference>
<dbReference type="GO" id="GO:0005737">
    <property type="term" value="C:cytoplasm"/>
    <property type="evidence" value="ECO:0000318"/>
    <property type="project" value="GO_Central"/>
</dbReference>
<dbReference type="GO" id="GO:0004452">
    <property type="term" value="F:isopentenyl-diphosphate delta-isomerase activity"/>
    <property type="evidence" value="ECO:0000318"/>
    <property type="project" value="GO_Central"/>
</dbReference>
<dbReference type="GO" id="GO:0046872">
    <property type="term" value="F:metal ion binding"/>
    <property type="evidence" value="ECO:0007669"/>
    <property type="project" value="UniProtKB-KW"/>
</dbReference>
<dbReference type="GO" id="GO:0050992">
    <property type="term" value="P:dimethylallyl diphosphate biosynthetic process"/>
    <property type="evidence" value="ECO:0007669"/>
    <property type="project" value="UniProtKB-UniRule"/>
</dbReference>
<dbReference type="GO" id="GO:0009240">
    <property type="term" value="P:isopentenyl diphosphate biosynthetic process"/>
    <property type="evidence" value="ECO:0000318"/>
    <property type="project" value="GO_Central"/>
</dbReference>
<dbReference type="CDD" id="cd02885">
    <property type="entry name" value="NUDIX_IPP_Isomerase"/>
    <property type="match status" value="1"/>
</dbReference>
<dbReference type="FunFam" id="3.90.79.10:FF:000009">
    <property type="entry name" value="Isopentenyl-diphosphate Delta-isomerase"/>
    <property type="match status" value="1"/>
</dbReference>
<dbReference type="Gene3D" id="3.90.79.10">
    <property type="entry name" value="Nucleoside Triphosphate Pyrophosphohydrolase"/>
    <property type="match status" value="1"/>
</dbReference>
<dbReference type="HAMAP" id="MF_00202">
    <property type="entry name" value="Idi"/>
    <property type="match status" value="1"/>
</dbReference>
<dbReference type="InterPro" id="IPR056375">
    <property type="entry name" value="Idi_bact"/>
</dbReference>
<dbReference type="InterPro" id="IPR011876">
    <property type="entry name" value="IsopentenylPP_isomerase_typ1"/>
</dbReference>
<dbReference type="InterPro" id="IPR015797">
    <property type="entry name" value="NUDIX_hydrolase-like_dom_sf"/>
</dbReference>
<dbReference type="InterPro" id="IPR000086">
    <property type="entry name" value="NUDIX_hydrolase_dom"/>
</dbReference>
<dbReference type="NCBIfam" id="TIGR02150">
    <property type="entry name" value="IPP_isom_1"/>
    <property type="match status" value="1"/>
</dbReference>
<dbReference type="NCBIfam" id="NF002995">
    <property type="entry name" value="PRK03759.1"/>
    <property type="match status" value="1"/>
</dbReference>
<dbReference type="PANTHER" id="PTHR10885">
    <property type="entry name" value="ISOPENTENYL-DIPHOSPHATE DELTA-ISOMERASE"/>
    <property type="match status" value="1"/>
</dbReference>
<dbReference type="PANTHER" id="PTHR10885:SF0">
    <property type="entry name" value="ISOPENTENYL-DIPHOSPHATE DELTA-ISOMERASE"/>
    <property type="match status" value="1"/>
</dbReference>
<dbReference type="Pfam" id="PF00293">
    <property type="entry name" value="NUDIX"/>
    <property type="match status" value="1"/>
</dbReference>
<dbReference type="PIRSF" id="PIRSF018427">
    <property type="entry name" value="Isopntndiph_ism"/>
    <property type="match status" value="1"/>
</dbReference>
<dbReference type="SUPFAM" id="SSF55811">
    <property type="entry name" value="Nudix"/>
    <property type="match status" value="1"/>
</dbReference>
<dbReference type="PROSITE" id="PS51462">
    <property type="entry name" value="NUDIX"/>
    <property type="match status" value="1"/>
</dbReference>
<sequence length="197" mass="21193">MPITPATATPSSSNGTAEAILLELVDENGVTIGTAEKLSAHQPPGRLHRAFSVFLFDERGRLLIQQRALGKYHSPGVWSNTCCGHPYPGEAPFAAAARRTFEELGVSPSLLAEAGTVRYNHPDPASGLVEQEYNHLFVGLVQAELRPDPEEVAGTAFVSPAELTERHAQDTFSAWFMTVLDAARPAVRELTGTSAGW</sequence>
<name>IDI_STRCO</name>
<gene>
    <name evidence="1" type="primary">idi</name>
    <name type="ordered locus">SCO6750</name>
    <name type="ORF">SC5F2A.33c</name>
</gene>
<keyword id="KW-0963">Cytoplasm</keyword>
<keyword id="KW-0413">Isomerase</keyword>
<keyword id="KW-0414">Isoprene biosynthesis</keyword>
<keyword id="KW-0460">Magnesium</keyword>
<keyword id="KW-0464">Manganese</keyword>
<keyword id="KW-0479">Metal-binding</keyword>
<keyword id="KW-1185">Reference proteome</keyword>
<feature type="chain" id="PRO_0000205269" description="Isopentenyl-diphosphate Delta-isomerase">
    <location>
        <begin position="1"/>
        <end position="197"/>
    </location>
</feature>
<feature type="domain" description="Nudix hydrolase">
    <location>
        <begin position="46"/>
        <end position="183"/>
    </location>
</feature>
<feature type="active site" evidence="1">
    <location>
        <position position="83"/>
    </location>
</feature>
<feature type="active site" evidence="1">
    <location>
        <position position="132"/>
    </location>
</feature>
<feature type="binding site" evidence="1">
    <location>
        <position position="41"/>
    </location>
    <ligand>
        <name>Mn(2+)</name>
        <dbReference type="ChEBI" id="CHEBI:29035"/>
    </ligand>
</feature>
<feature type="binding site" evidence="1">
    <location>
        <position position="48"/>
    </location>
    <ligand>
        <name>Mn(2+)</name>
        <dbReference type="ChEBI" id="CHEBI:29035"/>
    </ligand>
</feature>
<feature type="binding site" evidence="1">
    <location>
        <position position="83"/>
    </location>
    <ligand>
        <name>Mg(2+)</name>
        <dbReference type="ChEBI" id="CHEBI:18420"/>
    </ligand>
</feature>
<feature type="binding site" evidence="1">
    <location>
        <position position="85"/>
    </location>
    <ligand>
        <name>Mn(2+)</name>
        <dbReference type="ChEBI" id="CHEBI:29035"/>
    </ligand>
</feature>
<feature type="binding site" evidence="1">
    <location>
        <position position="103"/>
    </location>
    <ligand>
        <name>Mg(2+)</name>
        <dbReference type="ChEBI" id="CHEBI:18420"/>
    </ligand>
</feature>
<feature type="binding site" evidence="1">
    <location>
        <position position="130"/>
    </location>
    <ligand>
        <name>Mn(2+)</name>
        <dbReference type="ChEBI" id="CHEBI:29035"/>
    </ligand>
</feature>
<feature type="binding site" evidence="1">
    <location>
        <position position="132"/>
    </location>
    <ligand>
        <name>Mn(2+)</name>
        <dbReference type="ChEBI" id="CHEBI:29035"/>
    </ligand>
</feature>
<evidence type="ECO:0000255" key="1">
    <source>
        <dbReference type="HAMAP-Rule" id="MF_00202"/>
    </source>
</evidence>
<reference key="1">
    <citation type="journal article" date="2002" name="Nature">
        <title>Complete genome sequence of the model actinomycete Streptomyces coelicolor A3(2).</title>
        <authorList>
            <person name="Bentley S.D."/>
            <person name="Chater K.F."/>
            <person name="Cerdeno-Tarraga A.-M."/>
            <person name="Challis G.L."/>
            <person name="Thomson N.R."/>
            <person name="James K.D."/>
            <person name="Harris D.E."/>
            <person name="Quail M.A."/>
            <person name="Kieser H."/>
            <person name="Harper D."/>
            <person name="Bateman A."/>
            <person name="Brown S."/>
            <person name="Chandra G."/>
            <person name="Chen C.W."/>
            <person name="Collins M."/>
            <person name="Cronin A."/>
            <person name="Fraser A."/>
            <person name="Goble A."/>
            <person name="Hidalgo J."/>
            <person name="Hornsby T."/>
            <person name="Howarth S."/>
            <person name="Huang C.-H."/>
            <person name="Kieser T."/>
            <person name="Larke L."/>
            <person name="Murphy L.D."/>
            <person name="Oliver K."/>
            <person name="O'Neil S."/>
            <person name="Rabbinowitsch E."/>
            <person name="Rajandream M.A."/>
            <person name="Rutherford K.M."/>
            <person name="Rutter S."/>
            <person name="Seeger K."/>
            <person name="Saunders D."/>
            <person name="Sharp S."/>
            <person name="Squares R."/>
            <person name="Squares S."/>
            <person name="Taylor K."/>
            <person name="Warren T."/>
            <person name="Wietzorrek A."/>
            <person name="Woodward J.R."/>
            <person name="Barrell B.G."/>
            <person name="Parkhill J."/>
            <person name="Hopwood D.A."/>
        </authorList>
    </citation>
    <scope>NUCLEOTIDE SEQUENCE [LARGE SCALE GENOMIC DNA]</scope>
    <source>
        <strain>ATCC BAA-471 / A3(2) / M145</strain>
    </source>
</reference>
<proteinExistence type="inferred from homology"/>